<comment type="function">
    <text evidence="1">Hydrolyzes ribosome-free peptidyl-tRNAs (with 1 or more amino acids incorporated), which drop off the ribosome during protein synthesis, or as a result of ribosome stalling.</text>
</comment>
<comment type="function">
    <text evidence="1">Catalyzes the release of premature peptidyl moieties from peptidyl-tRNA molecules trapped in stalled 50S ribosomal subunits, and thus maintains levels of free tRNAs and 50S ribosomes.</text>
</comment>
<comment type="catalytic activity">
    <reaction evidence="1">
        <text>an N-acyl-L-alpha-aminoacyl-tRNA + H2O = an N-acyl-L-amino acid + a tRNA + H(+)</text>
        <dbReference type="Rhea" id="RHEA:54448"/>
        <dbReference type="Rhea" id="RHEA-COMP:10123"/>
        <dbReference type="Rhea" id="RHEA-COMP:13883"/>
        <dbReference type="ChEBI" id="CHEBI:15377"/>
        <dbReference type="ChEBI" id="CHEBI:15378"/>
        <dbReference type="ChEBI" id="CHEBI:59874"/>
        <dbReference type="ChEBI" id="CHEBI:78442"/>
        <dbReference type="ChEBI" id="CHEBI:138191"/>
        <dbReference type="EC" id="3.1.1.29"/>
    </reaction>
</comment>
<comment type="subunit">
    <text evidence="1">Monomer.</text>
</comment>
<comment type="subcellular location">
    <subcellularLocation>
        <location evidence="1">Cytoplasm</location>
    </subcellularLocation>
</comment>
<comment type="similarity">
    <text evidence="1">Belongs to the PTH family.</text>
</comment>
<gene>
    <name evidence="1" type="primary">pth</name>
    <name type="ordered locus">LSL_1361</name>
</gene>
<feature type="chain" id="PRO_0000264052" description="Peptidyl-tRNA hydrolase">
    <location>
        <begin position="1"/>
        <end position="185"/>
    </location>
</feature>
<feature type="active site" description="Proton acceptor" evidence="1">
    <location>
        <position position="19"/>
    </location>
</feature>
<feature type="binding site" evidence="1">
    <location>
        <position position="14"/>
    </location>
    <ligand>
        <name>tRNA</name>
        <dbReference type="ChEBI" id="CHEBI:17843"/>
    </ligand>
</feature>
<feature type="binding site" evidence="1">
    <location>
        <position position="64"/>
    </location>
    <ligand>
        <name>tRNA</name>
        <dbReference type="ChEBI" id="CHEBI:17843"/>
    </ligand>
</feature>
<feature type="binding site" evidence="1">
    <location>
        <position position="66"/>
    </location>
    <ligand>
        <name>tRNA</name>
        <dbReference type="ChEBI" id="CHEBI:17843"/>
    </ligand>
</feature>
<feature type="binding site" evidence="1">
    <location>
        <position position="112"/>
    </location>
    <ligand>
        <name>tRNA</name>
        <dbReference type="ChEBI" id="CHEBI:17843"/>
    </ligand>
</feature>
<feature type="site" description="Discriminates between blocked and unblocked aminoacyl-tRNA" evidence="1">
    <location>
        <position position="9"/>
    </location>
</feature>
<feature type="site" description="Stabilizes the basic form of H active site to accept a proton" evidence="1">
    <location>
        <position position="91"/>
    </location>
</feature>
<sequence length="185" mass="21203">MKMIVGLGNIEKKYEGTRHNVGFMVVERFVEEHGGNFNKEKFDSLISELFINGEKIIVIKPTTYMNESGRAVRPLMDYFNLTTEDIIICHDDMDLEIGHLRLRQKGSAGGHNGIKSIISHVGTEKFKRVRVGIDHPQKMSVVDWVLSRFTKEQEAKLDDGLTRAVAALDDWIENDDFMNTMNRFN</sequence>
<accession>Q1WSG3</accession>
<reference key="1">
    <citation type="journal article" date="2006" name="Proc. Natl. Acad. Sci. U.S.A.">
        <title>Multireplicon genome architecture of Lactobacillus salivarius.</title>
        <authorList>
            <person name="Claesson M.J."/>
            <person name="Li Y."/>
            <person name="Leahy S."/>
            <person name="Canchaya C."/>
            <person name="van Pijkeren J.P."/>
            <person name="Cerdeno-Tarraga A.M."/>
            <person name="Parkhill J."/>
            <person name="Flynn S."/>
            <person name="O'Sullivan G.C."/>
            <person name="Collins J.K."/>
            <person name="Higgins D."/>
            <person name="Shanahan F."/>
            <person name="Fitzgerald G.F."/>
            <person name="van Sinderen D."/>
            <person name="O'Toole P.W."/>
        </authorList>
    </citation>
    <scope>NUCLEOTIDE SEQUENCE [LARGE SCALE GENOMIC DNA]</scope>
    <source>
        <strain>UCC118</strain>
    </source>
</reference>
<proteinExistence type="inferred from homology"/>
<evidence type="ECO:0000255" key="1">
    <source>
        <dbReference type="HAMAP-Rule" id="MF_00083"/>
    </source>
</evidence>
<dbReference type="EC" id="3.1.1.29" evidence="1"/>
<dbReference type="EMBL" id="CP000233">
    <property type="protein sequence ID" value="ABE00166.1"/>
    <property type="molecule type" value="Genomic_DNA"/>
</dbReference>
<dbReference type="RefSeq" id="WP_011476306.1">
    <property type="nucleotide sequence ID" value="NC_007929.1"/>
</dbReference>
<dbReference type="RefSeq" id="YP_536249.1">
    <property type="nucleotide sequence ID" value="NC_007929.1"/>
</dbReference>
<dbReference type="SMR" id="Q1WSG3"/>
<dbReference type="STRING" id="362948.LSL_1361"/>
<dbReference type="KEGG" id="lsl:LSL_1361"/>
<dbReference type="PATRIC" id="fig|362948.14.peg.1438"/>
<dbReference type="HOGENOM" id="CLU_062456_4_1_9"/>
<dbReference type="OrthoDB" id="9800507at2"/>
<dbReference type="Proteomes" id="UP000006559">
    <property type="component" value="Chromosome"/>
</dbReference>
<dbReference type="GO" id="GO:0005737">
    <property type="term" value="C:cytoplasm"/>
    <property type="evidence" value="ECO:0007669"/>
    <property type="project" value="UniProtKB-SubCell"/>
</dbReference>
<dbReference type="GO" id="GO:0004045">
    <property type="term" value="F:peptidyl-tRNA hydrolase activity"/>
    <property type="evidence" value="ECO:0007669"/>
    <property type="project" value="UniProtKB-UniRule"/>
</dbReference>
<dbReference type="GO" id="GO:0000049">
    <property type="term" value="F:tRNA binding"/>
    <property type="evidence" value="ECO:0007669"/>
    <property type="project" value="UniProtKB-UniRule"/>
</dbReference>
<dbReference type="GO" id="GO:0006515">
    <property type="term" value="P:protein quality control for misfolded or incompletely synthesized proteins"/>
    <property type="evidence" value="ECO:0007669"/>
    <property type="project" value="UniProtKB-UniRule"/>
</dbReference>
<dbReference type="GO" id="GO:0072344">
    <property type="term" value="P:rescue of stalled ribosome"/>
    <property type="evidence" value="ECO:0007669"/>
    <property type="project" value="UniProtKB-UniRule"/>
</dbReference>
<dbReference type="CDD" id="cd00462">
    <property type="entry name" value="PTH"/>
    <property type="match status" value="1"/>
</dbReference>
<dbReference type="FunFam" id="3.40.50.1470:FF:000001">
    <property type="entry name" value="Peptidyl-tRNA hydrolase"/>
    <property type="match status" value="1"/>
</dbReference>
<dbReference type="Gene3D" id="3.40.50.1470">
    <property type="entry name" value="Peptidyl-tRNA hydrolase"/>
    <property type="match status" value="1"/>
</dbReference>
<dbReference type="HAMAP" id="MF_00083">
    <property type="entry name" value="Pept_tRNA_hydro_bact"/>
    <property type="match status" value="1"/>
</dbReference>
<dbReference type="InterPro" id="IPR001328">
    <property type="entry name" value="Pept_tRNA_hydro"/>
</dbReference>
<dbReference type="InterPro" id="IPR018171">
    <property type="entry name" value="Pept_tRNA_hydro_CS"/>
</dbReference>
<dbReference type="InterPro" id="IPR036416">
    <property type="entry name" value="Pept_tRNA_hydro_sf"/>
</dbReference>
<dbReference type="NCBIfam" id="TIGR00447">
    <property type="entry name" value="pth"/>
    <property type="match status" value="1"/>
</dbReference>
<dbReference type="PANTHER" id="PTHR17224">
    <property type="entry name" value="PEPTIDYL-TRNA HYDROLASE"/>
    <property type="match status" value="1"/>
</dbReference>
<dbReference type="PANTHER" id="PTHR17224:SF1">
    <property type="entry name" value="PEPTIDYL-TRNA HYDROLASE"/>
    <property type="match status" value="1"/>
</dbReference>
<dbReference type="Pfam" id="PF01195">
    <property type="entry name" value="Pept_tRNA_hydro"/>
    <property type="match status" value="1"/>
</dbReference>
<dbReference type="SUPFAM" id="SSF53178">
    <property type="entry name" value="Peptidyl-tRNA hydrolase-like"/>
    <property type="match status" value="1"/>
</dbReference>
<dbReference type="PROSITE" id="PS01195">
    <property type="entry name" value="PEPT_TRNA_HYDROL_1"/>
    <property type="match status" value="1"/>
</dbReference>
<dbReference type="PROSITE" id="PS01196">
    <property type="entry name" value="PEPT_TRNA_HYDROL_2"/>
    <property type="match status" value="1"/>
</dbReference>
<name>PTH_LIGS1</name>
<keyword id="KW-0963">Cytoplasm</keyword>
<keyword id="KW-0378">Hydrolase</keyword>
<keyword id="KW-1185">Reference proteome</keyword>
<keyword id="KW-0694">RNA-binding</keyword>
<keyword id="KW-0820">tRNA-binding</keyword>
<protein>
    <recommendedName>
        <fullName evidence="1">Peptidyl-tRNA hydrolase</fullName>
        <shortName evidence="1">Pth</shortName>
        <ecNumber evidence="1">3.1.1.29</ecNumber>
    </recommendedName>
</protein>
<organism>
    <name type="scientific">Ligilactobacillus salivarius (strain UCC118)</name>
    <name type="common">Lactobacillus salivarius</name>
    <dbReference type="NCBI Taxonomy" id="362948"/>
    <lineage>
        <taxon>Bacteria</taxon>
        <taxon>Bacillati</taxon>
        <taxon>Bacillota</taxon>
        <taxon>Bacilli</taxon>
        <taxon>Lactobacillales</taxon>
        <taxon>Lactobacillaceae</taxon>
        <taxon>Ligilactobacillus</taxon>
    </lineage>
</organism>